<gene>
    <name evidence="1" type="primary">creN7</name>
    <name type="ordered locus">YG5714_1233</name>
</gene>
<evidence type="ECO:0000255" key="1">
    <source>
        <dbReference type="HAMAP-Rule" id="MF_01387"/>
    </source>
</evidence>
<sequence>MSSGKKAVKVKTPAGKEAELVPEKVWALAPKGRKGVKIGLFKDPETGKYFRHKLPDDYPI</sequence>
<organism>
    <name type="scientific">Saccharolobus islandicus (strain Y.G.57.14 / Yellowstone #1)</name>
    <name type="common">Sulfolobus islandicus</name>
    <dbReference type="NCBI Taxonomy" id="439386"/>
    <lineage>
        <taxon>Archaea</taxon>
        <taxon>Thermoproteota</taxon>
        <taxon>Thermoprotei</taxon>
        <taxon>Sulfolobales</taxon>
        <taxon>Sulfolobaceae</taxon>
        <taxon>Saccharolobus</taxon>
    </lineage>
</organism>
<reference key="1">
    <citation type="journal article" date="2009" name="Proc. Natl. Acad. Sci. U.S.A.">
        <title>Biogeography of the Sulfolobus islandicus pan-genome.</title>
        <authorList>
            <person name="Reno M.L."/>
            <person name="Held N.L."/>
            <person name="Fields C.J."/>
            <person name="Burke P.V."/>
            <person name="Whitaker R.J."/>
        </authorList>
    </citation>
    <scope>NUCLEOTIDE SEQUENCE [LARGE SCALE GENOMIC DNA]</scope>
    <source>
        <strain>Y.G.57.14 / Yellowstone #1</strain>
    </source>
</reference>
<name>CREN7_SACI7</name>
<dbReference type="EMBL" id="CP001403">
    <property type="protein sequence ID" value="ACP45499.1"/>
    <property type="molecule type" value="Genomic_DNA"/>
</dbReference>
<dbReference type="RefSeq" id="WP_012711256.1">
    <property type="nucleotide sequence ID" value="NC_012622.1"/>
</dbReference>
<dbReference type="BMRB" id="C3NDW0"/>
<dbReference type="SMR" id="C3NDW0"/>
<dbReference type="GeneID" id="84061563"/>
<dbReference type="KEGG" id="siy:YG5714_1233"/>
<dbReference type="HOGENOM" id="CLU_2911298_0_0_2"/>
<dbReference type="Proteomes" id="UP000002308">
    <property type="component" value="Chromosome"/>
</dbReference>
<dbReference type="GO" id="GO:0005694">
    <property type="term" value="C:chromosome"/>
    <property type="evidence" value="ECO:0007669"/>
    <property type="project" value="UniProtKB-SubCell"/>
</dbReference>
<dbReference type="GO" id="GO:0005737">
    <property type="term" value="C:cytoplasm"/>
    <property type="evidence" value="ECO:0007669"/>
    <property type="project" value="UniProtKB-SubCell"/>
</dbReference>
<dbReference type="GO" id="GO:0003690">
    <property type="term" value="F:double-stranded DNA binding"/>
    <property type="evidence" value="ECO:0007669"/>
    <property type="project" value="UniProtKB-UniRule"/>
</dbReference>
<dbReference type="Gene3D" id="2.30.30.610">
    <property type="entry name" value="Chromatin protein Cren7"/>
    <property type="match status" value="1"/>
</dbReference>
<dbReference type="HAMAP" id="MF_01387">
    <property type="entry name" value="Chromatin_Cren7"/>
    <property type="match status" value="1"/>
</dbReference>
<dbReference type="InterPro" id="IPR038647">
    <property type="entry name" value="Cren7_sf"/>
</dbReference>
<dbReference type="InterPro" id="IPR020906">
    <property type="entry name" value="dsDNA-bd_Cren7"/>
</dbReference>
<dbReference type="Pfam" id="PF11520">
    <property type="entry name" value="Cren7"/>
    <property type="match status" value="1"/>
</dbReference>
<feature type="chain" id="PRO_1000215135" description="Chromatin protein Cren7">
    <location>
        <begin position="1"/>
        <end position="60"/>
    </location>
</feature>
<accession>C3NDW0</accession>
<keyword id="KW-0158">Chromosome</keyword>
<keyword id="KW-0963">Cytoplasm</keyword>
<keyword id="KW-0238">DNA-binding</keyword>
<keyword id="KW-0488">Methylation</keyword>
<protein>
    <recommendedName>
        <fullName evidence="1">Chromatin protein Cren7</fullName>
    </recommendedName>
</protein>
<comment type="function">
    <text evidence="1">A chromatin protein, binds double-stranded DNA without sequence specificity. Constrains negative DNA supercoils.</text>
</comment>
<comment type="subunit">
    <text evidence="1">Monomer.</text>
</comment>
<comment type="subcellular location">
    <subcellularLocation>
        <location evidence="1">Chromosome</location>
    </subcellularLocation>
    <subcellularLocation>
        <location evidence="1">Cytoplasm</location>
    </subcellularLocation>
</comment>
<comment type="PTM">
    <text evidence="1">Methylated at multiple sites, to varying extents.</text>
</comment>
<comment type="similarity">
    <text evidence="1">Belongs to the Cren7 family.</text>
</comment>
<proteinExistence type="inferred from homology"/>